<name>WDR91_PONAB</name>
<protein>
    <recommendedName>
        <fullName evidence="1">WD repeat-containing protein 91</fullName>
    </recommendedName>
</protein>
<comment type="function">
    <text evidence="1 2">Functions as a negative regulator of the PI3 kinase/PI3K activity associated with endosomal membranes via BECN1, a core subunit of the PI3K complex. By modifying the phosphatidylinositol 3-phosphate/PtdInsP3 content of endosomal membranes may regulate endosome fusion, recycling, sorting and early to late endosome transport. It is for instance, required for the delivery of cargos like BST2/tetherin from early to late endosome and thereby participates indirectly to their degradation by the lysosome. May play a role in meiosis.</text>
</comment>
<comment type="subunit">
    <text evidence="1">Interacts with WDR81; involved in early to late endosome cargo transport. Interacts with BECN1; negatively regulates the PI3 kinase/PI3K activity associated with endosomal membranes.</text>
</comment>
<comment type="subcellular location">
    <subcellularLocation>
        <location evidence="1">Early endosome membrane</location>
        <topology evidence="1">Peripheral membrane protein</topology>
    </subcellularLocation>
    <subcellularLocation>
        <location evidence="1">Late endosome membrane</location>
    </subcellularLocation>
</comment>
<comment type="similarity">
    <text evidence="5">Belongs to the WD repeat WDR91 family.</text>
</comment>
<dbReference type="EMBL" id="CR860398">
    <property type="protein sequence ID" value="CAH92524.1"/>
    <property type="molecule type" value="mRNA"/>
</dbReference>
<dbReference type="RefSeq" id="NP_001127560.1">
    <property type="nucleotide sequence ID" value="NM_001134088.1"/>
</dbReference>
<dbReference type="SMR" id="Q5R6T6"/>
<dbReference type="STRING" id="9601.ENSPPYP00000020226"/>
<dbReference type="GeneID" id="100174638"/>
<dbReference type="KEGG" id="pon:100174638"/>
<dbReference type="CTD" id="29062"/>
<dbReference type="eggNOG" id="KOG1333">
    <property type="taxonomic scope" value="Eukaryota"/>
</dbReference>
<dbReference type="InParanoid" id="Q5R6T6"/>
<dbReference type="OrthoDB" id="193023at2759"/>
<dbReference type="Proteomes" id="UP000001595">
    <property type="component" value="Unplaced"/>
</dbReference>
<dbReference type="GO" id="GO:0005829">
    <property type="term" value="C:cytosol"/>
    <property type="evidence" value="ECO:0000250"/>
    <property type="project" value="UniProtKB"/>
</dbReference>
<dbReference type="GO" id="GO:0031901">
    <property type="term" value="C:early endosome membrane"/>
    <property type="evidence" value="ECO:0000250"/>
    <property type="project" value="UniProtKB"/>
</dbReference>
<dbReference type="GO" id="GO:0010008">
    <property type="term" value="C:endosome membrane"/>
    <property type="evidence" value="ECO:0000250"/>
    <property type="project" value="UniProtKB"/>
</dbReference>
<dbReference type="GO" id="GO:0031902">
    <property type="term" value="C:late endosome membrane"/>
    <property type="evidence" value="ECO:0000250"/>
    <property type="project" value="UniProtKB"/>
</dbReference>
<dbReference type="GO" id="GO:0141039">
    <property type="term" value="F:phosphatidylinositol 3-kinase inhibitor activity"/>
    <property type="evidence" value="ECO:0000250"/>
    <property type="project" value="UniProtKB"/>
</dbReference>
<dbReference type="GO" id="GO:0045022">
    <property type="term" value="P:early endosome to late endosome transport"/>
    <property type="evidence" value="ECO:0000250"/>
    <property type="project" value="UniProtKB"/>
</dbReference>
<dbReference type="GO" id="GO:0051898">
    <property type="term" value="P:negative regulation of phosphatidylinositol 3-kinase/protein kinase B signal transduction"/>
    <property type="evidence" value="ECO:0007669"/>
    <property type="project" value="InterPro"/>
</dbReference>
<dbReference type="FunFam" id="2.130.10.10:FF:000312">
    <property type="entry name" value="WD repeat domain 91"/>
    <property type="match status" value="1"/>
</dbReference>
<dbReference type="FunFam" id="2.130.10.10:FF:000276">
    <property type="entry name" value="WD repeat-containing protein 91"/>
    <property type="match status" value="1"/>
</dbReference>
<dbReference type="Gene3D" id="2.130.10.10">
    <property type="entry name" value="YVTN repeat-like/Quinoprotein amine dehydrogenase"/>
    <property type="match status" value="2"/>
</dbReference>
<dbReference type="InterPro" id="IPR056327">
    <property type="entry name" value="ARMC9_CTLH-like_dom"/>
</dbReference>
<dbReference type="InterPro" id="IPR015943">
    <property type="entry name" value="WD40/YVTN_repeat-like_dom_sf"/>
</dbReference>
<dbReference type="InterPro" id="IPR036322">
    <property type="entry name" value="WD40_repeat_dom_sf"/>
</dbReference>
<dbReference type="InterPro" id="IPR001680">
    <property type="entry name" value="WD40_rpt"/>
</dbReference>
<dbReference type="InterPro" id="IPR039724">
    <property type="entry name" value="WDR91"/>
</dbReference>
<dbReference type="PANTHER" id="PTHR13083">
    <property type="entry name" value="WD REPEAT-CONTAINING PROTEIN 91"/>
    <property type="match status" value="1"/>
</dbReference>
<dbReference type="PANTHER" id="PTHR13083:SF3">
    <property type="entry name" value="WD REPEAT-CONTAINING PROTEIN 91"/>
    <property type="match status" value="1"/>
</dbReference>
<dbReference type="Pfam" id="PF23138">
    <property type="entry name" value="CTLH_Armc9"/>
    <property type="match status" value="1"/>
</dbReference>
<dbReference type="Pfam" id="PF00400">
    <property type="entry name" value="WD40"/>
    <property type="match status" value="4"/>
</dbReference>
<dbReference type="SMART" id="SM00320">
    <property type="entry name" value="WD40"/>
    <property type="match status" value="5"/>
</dbReference>
<dbReference type="SUPFAM" id="SSF50978">
    <property type="entry name" value="WD40 repeat-like"/>
    <property type="match status" value="1"/>
</dbReference>
<dbReference type="PROSITE" id="PS50082">
    <property type="entry name" value="WD_REPEATS_2"/>
    <property type="match status" value="2"/>
</dbReference>
<dbReference type="PROSITE" id="PS50294">
    <property type="entry name" value="WD_REPEATS_REGION"/>
    <property type="match status" value="2"/>
</dbReference>
<proteinExistence type="evidence at transcript level"/>
<reference key="1">
    <citation type="submission" date="2004-11" db="EMBL/GenBank/DDBJ databases">
        <authorList>
            <consortium name="The German cDNA consortium"/>
        </authorList>
    </citation>
    <scope>NUCLEOTIDE SEQUENCE [LARGE SCALE MRNA]</scope>
    <source>
        <tissue>Brain cortex</tissue>
    </source>
</reference>
<organism>
    <name type="scientific">Pongo abelii</name>
    <name type="common">Sumatran orangutan</name>
    <name type="synonym">Pongo pygmaeus abelii</name>
    <dbReference type="NCBI Taxonomy" id="9601"/>
    <lineage>
        <taxon>Eukaryota</taxon>
        <taxon>Metazoa</taxon>
        <taxon>Chordata</taxon>
        <taxon>Craniata</taxon>
        <taxon>Vertebrata</taxon>
        <taxon>Euteleostomi</taxon>
        <taxon>Mammalia</taxon>
        <taxon>Eutheria</taxon>
        <taxon>Euarchontoglires</taxon>
        <taxon>Primates</taxon>
        <taxon>Haplorrhini</taxon>
        <taxon>Catarrhini</taxon>
        <taxon>Hominidae</taxon>
        <taxon>Pongo</taxon>
    </lineage>
</organism>
<evidence type="ECO:0000250" key="1">
    <source>
        <dbReference type="UniProtKB" id="A4D1P6"/>
    </source>
</evidence>
<evidence type="ECO:0000250" key="2">
    <source>
        <dbReference type="UniProtKB" id="Q7TMQ7"/>
    </source>
</evidence>
<evidence type="ECO:0000255" key="3"/>
<evidence type="ECO:0000256" key="4">
    <source>
        <dbReference type="SAM" id="MobiDB-lite"/>
    </source>
</evidence>
<evidence type="ECO:0000305" key="5"/>
<keyword id="KW-0175">Coiled coil</keyword>
<keyword id="KW-0967">Endosome</keyword>
<keyword id="KW-0472">Membrane</keyword>
<keyword id="KW-0597">Phosphoprotein</keyword>
<keyword id="KW-1185">Reference proteome</keyword>
<keyword id="KW-0677">Repeat</keyword>
<keyword id="KW-0853">WD repeat</keyword>
<accession>Q5R6T6</accession>
<sequence length="712" mass="79269">MIFHCEVDKIVDQLQQLMQVYDLAALRDYWSYLERRLFSRLEDIYRPTIHKLKTSLFRFYLVYTIQTNRNDKAQEFFAKQATELQNQAEWKDWFVLPFLPSPDTNPTFATYFSRQWADTFIVSLHNFLSVLFQCMPVPVILNFDAECRRTNQVQEENEVLRQKLFALQAEIHRLKKEEQQPEEEEALVQHKLPPYVSNMDRLGDSELAMVCSQRNASLSQSPRVGFLSSLLPQSKKSPSRLSPAQGPPQAQSSAKKESFGGQGTKGKDPTSGAKDGKGLLSGLATGESGWSQHRQRRLQDHGKERKELFSTTTSQCAEKKPEASGPEAEPCPELHTEPVEPLTRTSLAGPEGGGVRPEQPFIVLGQEEYGEHHSSIMHCRVDCSGRRVASLDVDGVIKVWSFNPIMQTKASSISKSPLLSLEWATKRDRLLLLGSGVGTVRLYDTEAKKNLCEININDDMPRILSLACSPNGASFVCSAAAPSLTSQVDFSAPDIGSKGMNQVPGRLLLWDTKTMKQQLQFSLDPEPIAINCTAFNHNGNLLVTGAADGVIRLFDMQQHECAMSWRAHYGEVYSVEFSYDENTVYSIGEDGKFIQWNIHKSGLKVSEYSLPSDATGPFVLSGYSGYKQVQVPRGRLFAFDSEGNYMLTCSATGGVIYKLGGDEKVLESCLSLGGHRAPVVTVDWSTAMDCGTCLTASMDGKIKLTTLLAHKA</sequence>
<feature type="chain" id="PRO_0000295748" description="WD repeat-containing protein 91">
    <location>
        <begin position="1"/>
        <end position="712"/>
    </location>
</feature>
<feature type="repeat" description="WD 1">
    <location>
        <begin position="371"/>
        <end position="410"/>
    </location>
</feature>
<feature type="repeat" description="WD 2">
    <location>
        <begin position="413"/>
        <end position="453"/>
    </location>
</feature>
<feature type="repeat" description="WD 3">
    <location>
        <begin position="480"/>
        <end position="520"/>
    </location>
</feature>
<feature type="repeat" description="WD 4">
    <location>
        <begin position="525"/>
        <end position="564"/>
    </location>
</feature>
<feature type="repeat" description="WD 5">
    <location>
        <begin position="567"/>
        <end position="606"/>
    </location>
</feature>
<feature type="repeat" description="WD 6">
    <location>
        <begin position="629"/>
        <end position="667"/>
    </location>
</feature>
<feature type="repeat" description="WD 7">
    <location>
        <begin position="674"/>
        <end position="712"/>
    </location>
</feature>
<feature type="region of interest" description="Disordered" evidence="4">
    <location>
        <begin position="230"/>
        <end position="336"/>
    </location>
</feature>
<feature type="coiled-coil region" evidence="3">
    <location>
        <begin position="148"/>
        <end position="180"/>
    </location>
</feature>
<feature type="compositionally biased region" description="Low complexity" evidence="4">
    <location>
        <begin position="230"/>
        <end position="243"/>
    </location>
</feature>
<feature type="compositionally biased region" description="Basic and acidic residues" evidence="4">
    <location>
        <begin position="297"/>
        <end position="308"/>
    </location>
</feature>
<feature type="modified residue" description="Phosphoserine" evidence="1">
    <location>
        <position position="221"/>
    </location>
</feature>
<feature type="modified residue" description="Phosphoserine" evidence="1">
    <location>
        <position position="253"/>
    </location>
</feature>
<feature type="modified residue" description="Phosphoserine" evidence="2">
    <location>
        <position position="258"/>
    </location>
</feature>
<gene>
    <name evidence="1" type="primary">WDR91</name>
</gene>